<organism>
    <name type="scientific">Saccharomyces cerevisiae (strain Zymaflore VL3)</name>
    <name type="common">Baker's yeast</name>
    <dbReference type="NCBI Taxonomy" id="764100"/>
    <lineage>
        <taxon>Eukaryota</taxon>
        <taxon>Fungi</taxon>
        <taxon>Dikarya</taxon>
        <taxon>Ascomycota</taxon>
        <taxon>Saccharomycotina</taxon>
        <taxon>Saccharomycetes</taxon>
        <taxon>Saccharomycetales</taxon>
        <taxon>Saccharomycetaceae</taxon>
        <taxon>Saccharomyces</taxon>
    </lineage>
</organism>
<protein>
    <recommendedName>
        <fullName>Vacuolar membrane protein VL3_4134</fullName>
    </recommendedName>
</protein>
<evidence type="ECO:0000250" key="1"/>
<evidence type="ECO:0000250" key="2">
    <source>
        <dbReference type="UniProtKB" id="P53947"/>
    </source>
</evidence>
<evidence type="ECO:0000255" key="3"/>
<evidence type="ECO:0000256" key="4">
    <source>
        <dbReference type="SAM" id="MobiDB-lite"/>
    </source>
</evidence>
<evidence type="ECO:0000305" key="5"/>
<feature type="chain" id="PRO_0000409328" description="Vacuolar membrane protein VL3_4134">
    <location>
        <begin position="1"/>
        <end position="314"/>
    </location>
</feature>
<feature type="transmembrane region" description="Helical" evidence="3">
    <location>
        <begin position="93"/>
        <end position="113"/>
    </location>
</feature>
<feature type="region of interest" description="Disordered" evidence="4">
    <location>
        <begin position="32"/>
        <end position="60"/>
    </location>
</feature>
<feature type="region of interest" description="Disordered" evidence="4">
    <location>
        <begin position="240"/>
        <end position="309"/>
    </location>
</feature>
<feature type="compositionally biased region" description="Basic and acidic residues" evidence="4">
    <location>
        <begin position="254"/>
        <end position="269"/>
    </location>
</feature>
<feature type="modified residue" description="Phosphoserine" evidence="2">
    <location>
        <position position="148"/>
    </location>
</feature>
<feature type="modified residue" description="Phosphoserine" evidence="2">
    <location>
        <position position="254"/>
    </location>
</feature>
<feature type="modified residue" description="Phosphoserine" evidence="2">
    <location>
        <position position="274"/>
    </location>
</feature>
<sequence>MVKKNFIPSVSLVRRDLPTLVTTTTSSTALSKPTSSVVSETSSKSLPSLTSSAFSTSSGATSSSSLIVASITPPSTAGNPFILNAADKPNGTVYIAVGAVIGAIFISILIWWLVSSYLSRRFTMTNSYANDSKNLYRGHHKHSSSLQSNPFDINDEKSYMQDDWDSMSQLESSQYEDAASPFNPIQDPFTDXRRSLFISPTLQVSQYEKSHSRHQSKDTNIFIDDPSLYVGTYLEEEEEEERKLNLNRPQRAASPERKEKKINSMEGYHKRNQSSLGLIPVASATSNTSSPKKAHKRQAPSMFLDDVLNGREII</sequence>
<proteinExistence type="inferred from homology"/>
<dbReference type="EMBL" id="AEJS01000056">
    <property type="protein sequence ID" value="EGA85084.1"/>
    <property type="molecule type" value="Genomic_DNA"/>
</dbReference>
<dbReference type="HOGENOM" id="CLU_061224_0_0_1"/>
<dbReference type="OrthoDB" id="4065319at2759"/>
<dbReference type="GO" id="GO:0005935">
    <property type="term" value="C:cellular bud neck"/>
    <property type="evidence" value="ECO:0007669"/>
    <property type="project" value="TreeGrafter"/>
</dbReference>
<dbReference type="GO" id="GO:0000324">
    <property type="term" value="C:fungal-type vacuole"/>
    <property type="evidence" value="ECO:0007669"/>
    <property type="project" value="TreeGrafter"/>
</dbReference>
<dbReference type="GO" id="GO:0005774">
    <property type="term" value="C:vacuolar membrane"/>
    <property type="evidence" value="ECO:0007669"/>
    <property type="project" value="UniProtKB-SubCell"/>
</dbReference>
<dbReference type="InterPro" id="IPR051009">
    <property type="entry name" value="PRM"/>
</dbReference>
<dbReference type="PANTHER" id="PTHR36089">
    <property type="entry name" value="CHITIN SYNTHASE 3 COMPLEX PROTEIN CSI2-RELATED"/>
    <property type="match status" value="1"/>
</dbReference>
<dbReference type="PANTHER" id="PTHR36089:SF1">
    <property type="entry name" value="CHITIN SYNTHASE 3 COMPLEX PROTEIN CSI2-RELATED"/>
    <property type="match status" value="1"/>
</dbReference>
<comment type="subcellular location">
    <subcellularLocation>
        <location evidence="1">Vacuole membrane</location>
        <topology evidence="1">Single-pass membrane protein</topology>
    </subcellularLocation>
</comment>
<comment type="similarity">
    <text evidence="5">Belongs to the PRM5 family.</text>
</comment>
<accession>E7QK11</accession>
<name>YNF8_YEASZ</name>
<reference key="1">
    <citation type="journal article" date="2011" name="PLoS Genet.">
        <title>Whole-genome comparison reveals novel genetic elements that characterize the genome of industrial strains of Saccharomyces cerevisiae.</title>
        <authorList>
            <person name="Borneman A.R."/>
            <person name="Desany B.A."/>
            <person name="Riches D."/>
            <person name="Affourtit J.P."/>
            <person name="Forgan A.H."/>
            <person name="Pretorius I.S."/>
            <person name="Egholm M."/>
            <person name="Chambers P.J."/>
        </authorList>
    </citation>
    <scope>NUCLEOTIDE SEQUENCE [LARGE SCALE GENOMIC DNA]</scope>
    <source>
        <strain>Zymaflore VL3</strain>
    </source>
</reference>
<gene>
    <name type="ORF">VL3_4134</name>
</gene>
<keyword id="KW-0472">Membrane</keyword>
<keyword id="KW-0597">Phosphoprotein</keyword>
<keyword id="KW-0812">Transmembrane</keyword>
<keyword id="KW-1133">Transmembrane helix</keyword>
<keyword id="KW-0926">Vacuole</keyword>